<organism>
    <name type="scientific">Bos taurus</name>
    <name type="common">Bovine</name>
    <dbReference type="NCBI Taxonomy" id="9913"/>
    <lineage>
        <taxon>Eukaryota</taxon>
        <taxon>Metazoa</taxon>
        <taxon>Chordata</taxon>
        <taxon>Craniata</taxon>
        <taxon>Vertebrata</taxon>
        <taxon>Euteleostomi</taxon>
        <taxon>Mammalia</taxon>
        <taxon>Eutheria</taxon>
        <taxon>Laurasiatheria</taxon>
        <taxon>Artiodactyla</taxon>
        <taxon>Ruminantia</taxon>
        <taxon>Pecora</taxon>
        <taxon>Bovidae</taxon>
        <taxon>Bovinae</taxon>
        <taxon>Bos</taxon>
    </lineage>
</organism>
<evidence type="ECO:0000250" key="1"/>
<evidence type="ECO:0000250" key="2">
    <source>
        <dbReference type="UniProtKB" id="P51157"/>
    </source>
</evidence>
<evidence type="ECO:0000250" key="3">
    <source>
        <dbReference type="UniProtKB" id="P51158"/>
    </source>
</evidence>
<evidence type="ECO:0000250" key="4">
    <source>
        <dbReference type="UniProtKB" id="P62820"/>
    </source>
</evidence>
<evidence type="ECO:0000250" key="5">
    <source>
        <dbReference type="UniProtKB" id="Q99KL7"/>
    </source>
</evidence>
<evidence type="ECO:0000255" key="6">
    <source>
        <dbReference type="PROSITE-ProRule" id="PRU00753"/>
    </source>
</evidence>
<evidence type="ECO:0000269" key="7">
    <source>
    </source>
</evidence>
<evidence type="ECO:0000305" key="8"/>
<comment type="function">
    <text evidence="2 3 5">The small GTPases Rab are key regulators of intracellular membrane trafficking, from the formation of transport vesicles to their fusion with membranes (By similarity). Rabs cycle between an inactive GDP-bound form and an active GTP-bound form that is able to recruit to membranes different sets of downstream effectors directly responsible for vesicle formation, movement, tethering and fusion (By similarity). RAB28 is required for shedding and phagocytosis of cone cell outer segments (OS) discs in the retina (By similarity). Also participates in nuclear factor kappa-B p65/RELA nuclear transport in endothelial cells (By similarity).</text>
</comment>
<comment type="catalytic activity">
    <reaction evidence="2">
        <text>GTP + H2O = GDP + phosphate + H(+)</text>
        <dbReference type="Rhea" id="RHEA:19669"/>
        <dbReference type="ChEBI" id="CHEBI:15377"/>
        <dbReference type="ChEBI" id="CHEBI:15378"/>
        <dbReference type="ChEBI" id="CHEBI:37565"/>
        <dbReference type="ChEBI" id="CHEBI:43474"/>
        <dbReference type="ChEBI" id="CHEBI:58189"/>
        <dbReference type="EC" id="3.6.5.2"/>
    </reaction>
    <physiologicalReaction direction="left-to-right" evidence="2">
        <dbReference type="Rhea" id="RHEA:19670"/>
    </physiologicalReaction>
</comment>
<comment type="cofactor">
    <cofactor evidence="2">
        <name>Mg(2+)</name>
        <dbReference type="ChEBI" id="CHEBI:18420"/>
    </cofactor>
</comment>
<comment type="activity regulation">
    <text evidence="2">Regulated by guanine nucleotide exchange factors (GEFs) which promote the exchange of bound GDP for free GTP. Regulated by GTPase activating proteins (GAPs) which increase the GTP hydrolysis activity. Inhibited by GDP dissociation inhibitors (GDIs).</text>
</comment>
<comment type="subunit">
    <text evidence="3 7">Interacts (prenylated form) with PDE6D; the interaction promotes RAB28 delivery to the photoreceptor outer segments. Interacts with KCNJ13; the interaction may facilitate cone outer segments phagocytosis (PubMed:30228185). Interacts with RELA; the interaction contributes to RELA transport from cytoplasm to nucleus (By similarity).</text>
</comment>
<comment type="subcellular location">
    <subcellularLocation>
        <location evidence="8">Cell membrane</location>
        <topology evidence="8">Lipid-anchor</topology>
        <orientation evidence="8">Cytoplasmic side</orientation>
    </subcellularLocation>
    <subcellularLocation>
        <location evidence="3">Cytoplasm</location>
        <location evidence="3">Cytoskeleton</location>
        <location evidence="3">Cilium basal body</location>
    </subcellularLocation>
    <subcellularLocation>
        <location evidence="3">Cytoplasm</location>
    </subcellularLocation>
    <subcellularLocation>
        <location evidence="3">Nucleus</location>
    </subcellularLocation>
    <text evidence="3">Expressed in the basal body and ciliary rootlet of the photoreceptor cells (By similarity). Localized in the cytoplasm and the nucleus of vascular endothelial cells (By similarity).</text>
</comment>
<comment type="domain">
    <text evidence="2">Switch I, switch II and the interswitch regions are characteristic of Rab GTPases and mediate the interactions with Rab downstream effectors. The switch regions undergo conformational changes upon nucleotide binding which drive interaction with specific sets of effector proteins, with most effectors only binding to GTP-bound Rab.</text>
</comment>
<comment type="PTM">
    <text evidence="2">Isoprenylated.</text>
</comment>
<comment type="similarity">
    <text evidence="8">Belongs to the small GTPase superfamily. Rab family.</text>
</comment>
<accession>Q3SWY9</accession>
<sequence>MSDSEEESLDRQLKIVVLGDGTSGKTSLATCFAQETFGKQYKQTIGLDFFLRRITLPGSLNVTLQVWDIGGQTIGGKMLDKYIYGAQGVLLVYDVTNYQSFENLEDWYSVVKKVSEESETQPLVALVGNKIDLEHMRTVKPEKHLRFCQENGFSSHFVSAKTGDSVFLCFQKVAAEILGIKLNKAEIEQSQRVVKADIVNYNQEPMSRTVNPPRSSMCAVQ</sequence>
<dbReference type="EC" id="3.6.5.2" evidence="2"/>
<dbReference type="EMBL" id="BC104592">
    <property type="protein sequence ID" value="AAI04593.1"/>
    <property type="molecule type" value="mRNA"/>
</dbReference>
<dbReference type="RefSeq" id="NP_001029806.1">
    <property type="nucleotide sequence ID" value="NM_001034634.1"/>
</dbReference>
<dbReference type="SMR" id="Q3SWY9"/>
<dbReference type="BioGRID" id="192596">
    <property type="interactions" value="82"/>
</dbReference>
<dbReference type="FunCoup" id="Q3SWY9">
    <property type="interactions" value="2158"/>
</dbReference>
<dbReference type="STRING" id="9913.ENSBTAP00000004180"/>
<dbReference type="PaxDb" id="9913-ENSBTAP00000004180"/>
<dbReference type="Ensembl" id="ENSBTAT00000004180.4">
    <property type="protein sequence ID" value="ENSBTAP00000004180.2"/>
    <property type="gene ID" value="ENSBTAG00000003218.5"/>
</dbReference>
<dbReference type="GeneID" id="536021"/>
<dbReference type="KEGG" id="bta:536021"/>
<dbReference type="CTD" id="9364"/>
<dbReference type="VEuPathDB" id="HostDB:ENSBTAG00000003218"/>
<dbReference type="VGNC" id="VGNC:33635">
    <property type="gene designation" value="RAB28"/>
</dbReference>
<dbReference type="eggNOG" id="KOG0078">
    <property type="taxonomic scope" value="Eukaryota"/>
</dbReference>
<dbReference type="GeneTree" id="ENSGT00940000161833"/>
<dbReference type="HOGENOM" id="CLU_041217_10_4_1"/>
<dbReference type="InParanoid" id="Q3SWY9"/>
<dbReference type="OMA" id="YKNVNLH"/>
<dbReference type="OrthoDB" id="6585768at2759"/>
<dbReference type="TreeFam" id="TF313852"/>
<dbReference type="Proteomes" id="UP000009136">
    <property type="component" value="Chromosome 6"/>
</dbReference>
<dbReference type="Bgee" id="ENSBTAG00000003218">
    <property type="expression patterns" value="Expressed in spermatid and 107 other cell types or tissues"/>
</dbReference>
<dbReference type="GO" id="GO:0036064">
    <property type="term" value="C:ciliary basal body"/>
    <property type="evidence" value="ECO:0000250"/>
    <property type="project" value="UniProtKB"/>
</dbReference>
<dbReference type="GO" id="GO:0035253">
    <property type="term" value="C:ciliary rootlet"/>
    <property type="evidence" value="ECO:0000250"/>
    <property type="project" value="UniProtKB"/>
</dbReference>
<dbReference type="GO" id="GO:0005737">
    <property type="term" value="C:cytoplasm"/>
    <property type="evidence" value="ECO:0007669"/>
    <property type="project" value="UniProtKB-KW"/>
</dbReference>
<dbReference type="GO" id="GO:0005886">
    <property type="term" value="C:plasma membrane"/>
    <property type="evidence" value="ECO:0007669"/>
    <property type="project" value="UniProtKB-SubCell"/>
</dbReference>
<dbReference type="GO" id="GO:0003925">
    <property type="term" value="F:G protein activity"/>
    <property type="evidence" value="ECO:0000250"/>
    <property type="project" value="UniProtKB"/>
</dbReference>
<dbReference type="GO" id="GO:0019003">
    <property type="term" value="F:GDP binding"/>
    <property type="evidence" value="ECO:0000250"/>
    <property type="project" value="UniProtKB"/>
</dbReference>
<dbReference type="GO" id="GO:0005525">
    <property type="term" value="F:GTP binding"/>
    <property type="evidence" value="ECO:0000250"/>
    <property type="project" value="UniProtKB"/>
</dbReference>
<dbReference type="GO" id="GO:0003924">
    <property type="term" value="F:GTPase activity"/>
    <property type="evidence" value="ECO:0000318"/>
    <property type="project" value="GO_Central"/>
</dbReference>
<dbReference type="GO" id="GO:0016192">
    <property type="term" value="P:vesicle-mediated transport"/>
    <property type="evidence" value="ECO:0000318"/>
    <property type="project" value="GO_Central"/>
</dbReference>
<dbReference type="CDD" id="cd04109">
    <property type="entry name" value="Rab28"/>
    <property type="match status" value="1"/>
</dbReference>
<dbReference type="FunFam" id="3.40.50.300:FF:000513">
    <property type="entry name" value="ras-related protein Rab-28 isoform X2"/>
    <property type="match status" value="1"/>
</dbReference>
<dbReference type="Gene3D" id="3.40.50.300">
    <property type="entry name" value="P-loop containing nucleotide triphosphate hydrolases"/>
    <property type="match status" value="1"/>
</dbReference>
<dbReference type="InterPro" id="IPR027417">
    <property type="entry name" value="P-loop_NTPase"/>
</dbReference>
<dbReference type="InterPro" id="IPR005225">
    <property type="entry name" value="Small_GTP-bd"/>
</dbReference>
<dbReference type="InterPro" id="IPR001806">
    <property type="entry name" value="Small_GTPase"/>
</dbReference>
<dbReference type="NCBIfam" id="TIGR00231">
    <property type="entry name" value="small_GTP"/>
    <property type="match status" value="1"/>
</dbReference>
<dbReference type="PANTHER" id="PTHR47978">
    <property type="match status" value="1"/>
</dbReference>
<dbReference type="Pfam" id="PF00071">
    <property type="entry name" value="Ras"/>
    <property type="match status" value="1"/>
</dbReference>
<dbReference type="PRINTS" id="PR00449">
    <property type="entry name" value="RASTRNSFRMNG"/>
</dbReference>
<dbReference type="SMART" id="SM00175">
    <property type="entry name" value="RAB"/>
    <property type="match status" value="1"/>
</dbReference>
<dbReference type="SMART" id="SM00176">
    <property type="entry name" value="RAN"/>
    <property type="match status" value="1"/>
</dbReference>
<dbReference type="SMART" id="SM00173">
    <property type="entry name" value="RAS"/>
    <property type="match status" value="1"/>
</dbReference>
<dbReference type="SMART" id="SM00174">
    <property type="entry name" value="RHO"/>
    <property type="match status" value="1"/>
</dbReference>
<dbReference type="SUPFAM" id="SSF52540">
    <property type="entry name" value="P-loop containing nucleoside triphosphate hydrolases"/>
    <property type="match status" value="1"/>
</dbReference>
<dbReference type="PROSITE" id="PS51419">
    <property type="entry name" value="RAB"/>
    <property type="match status" value="1"/>
</dbReference>
<name>RAB28_BOVIN</name>
<gene>
    <name type="primary">RAB28</name>
</gene>
<feature type="initiator methionine" description="Removed" evidence="2">
    <location>
        <position position="1"/>
    </location>
</feature>
<feature type="chain" id="PRO_0000260530" description="Ras-related protein Rab-28">
    <location>
        <begin position="2"/>
        <end position="218"/>
    </location>
</feature>
<feature type="propeptide" id="PRO_0000396720" description="Removed in mature form" evidence="1">
    <location>
        <begin position="219"/>
        <end position="221"/>
    </location>
</feature>
<feature type="region of interest" description="Switch I" evidence="6">
    <location>
        <begin position="35"/>
        <end position="49"/>
    </location>
</feature>
<feature type="region of interest" description="Switch II" evidence="6">
    <location>
        <begin position="68"/>
        <end position="85"/>
    </location>
</feature>
<feature type="binding site" evidence="2">
    <location>
        <position position="21"/>
    </location>
    <ligand>
        <name>GTP</name>
        <dbReference type="ChEBI" id="CHEBI:37565"/>
    </ligand>
</feature>
<feature type="binding site" evidence="2">
    <location>
        <position position="24"/>
    </location>
    <ligand>
        <name>GTP</name>
        <dbReference type="ChEBI" id="CHEBI:37565"/>
    </ligand>
</feature>
<feature type="binding site" evidence="2">
    <location>
        <position position="25"/>
    </location>
    <ligand>
        <name>GTP</name>
        <dbReference type="ChEBI" id="CHEBI:37565"/>
    </ligand>
</feature>
<feature type="binding site" evidence="2">
    <location>
        <position position="26"/>
    </location>
    <ligand>
        <name>GTP</name>
        <dbReference type="ChEBI" id="CHEBI:37565"/>
    </ligand>
</feature>
<feature type="binding site" evidence="4">
    <location>
        <position position="26"/>
    </location>
    <ligand>
        <name>Mg(2+)</name>
        <dbReference type="ChEBI" id="CHEBI:18420"/>
    </ligand>
</feature>
<feature type="binding site" evidence="2">
    <location>
        <position position="27"/>
    </location>
    <ligand>
        <name>GTP</name>
        <dbReference type="ChEBI" id="CHEBI:37565"/>
    </ligand>
</feature>
<feature type="binding site" evidence="2">
    <location>
        <position position="38"/>
    </location>
    <ligand>
        <name>GTP</name>
        <dbReference type="ChEBI" id="CHEBI:37565"/>
    </ligand>
</feature>
<feature type="binding site" evidence="2">
    <location>
        <position position="39"/>
    </location>
    <ligand>
        <name>GTP</name>
        <dbReference type="ChEBI" id="CHEBI:37565"/>
    </ligand>
</feature>
<feature type="binding site" evidence="2">
    <location>
        <position position="41"/>
    </location>
    <ligand>
        <name>GTP</name>
        <dbReference type="ChEBI" id="CHEBI:37565"/>
    </ligand>
</feature>
<feature type="binding site" evidence="2">
    <location>
        <position position="44"/>
    </location>
    <ligand>
        <name>GTP</name>
        <dbReference type="ChEBI" id="CHEBI:37565"/>
    </ligand>
</feature>
<feature type="binding site" evidence="4">
    <location>
        <position position="44"/>
    </location>
    <ligand>
        <name>Mg(2+)</name>
        <dbReference type="ChEBI" id="CHEBI:18420"/>
    </ligand>
</feature>
<feature type="binding site" evidence="4">
    <location>
        <position position="68"/>
    </location>
    <ligand>
        <name>Mg(2+)</name>
        <dbReference type="ChEBI" id="CHEBI:18420"/>
    </ligand>
</feature>
<feature type="binding site" evidence="2">
    <location>
        <position position="71"/>
    </location>
    <ligand>
        <name>GTP</name>
        <dbReference type="ChEBI" id="CHEBI:37565"/>
    </ligand>
</feature>
<feature type="binding site" evidence="2">
    <location>
        <position position="129"/>
    </location>
    <ligand>
        <name>GTP</name>
        <dbReference type="ChEBI" id="CHEBI:37565"/>
    </ligand>
</feature>
<feature type="binding site" evidence="2">
    <location>
        <position position="130"/>
    </location>
    <ligand>
        <name>GTP</name>
        <dbReference type="ChEBI" id="CHEBI:37565"/>
    </ligand>
</feature>
<feature type="binding site" evidence="2">
    <location>
        <position position="132"/>
    </location>
    <ligand>
        <name>GTP</name>
        <dbReference type="ChEBI" id="CHEBI:37565"/>
    </ligand>
</feature>
<feature type="binding site" evidence="2">
    <location>
        <position position="160"/>
    </location>
    <ligand>
        <name>GTP</name>
        <dbReference type="ChEBI" id="CHEBI:37565"/>
    </ligand>
</feature>
<feature type="binding site" evidence="2">
    <location>
        <position position="161"/>
    </location>
    <ligand>
        <name>GTP</name>
        <dbReference type="ChEBI" id="CHEBI:37565"/>
    </ligand>
</feature>
<feature type="modified residue" description="N-acetylserine" evidence="2">
    <location>
        <position position="2"/>
    </location>
</feature>
<feature type="modified residue" description="Phosphoserine" evidence="2">
    <location>
        <position position="8"/>
    </location>
</feature>
<feature type="modified residue" description="Cysteine methyl ester" evidence="1">
    <location>
        <position position="218"/>
    </location>
</feature>
<feature type="lipid moiety-binding region" description="S-farnesyl cysteine" evidence="1">
    <location>
        <position position="218"/>
    </location>
</feature>
<reference key="1">
    <citation type="submission" date="2005-09" db="EMBL/GenBank/DDBJ databases">
        <authorList>
            <consortium name="NIH - Mammalian Gene Collection (MGC) project"/>
        </authorList>
    </citation>
    <scope>NUCLEOTIDE SEQUENCE [LARGE SCALE MRNA]</scope>
    <source>
        <strain>Hereford</strain>
        <tissue>Uterus</tissue>
    </source>
</reference>
<reference key="2">
    <citation type="journal article" date="2018" name="J. Biol. Chem.">
        <title>The small GTPase RAB28 is required for phagocytosis of cone outer segments by the murine retinal pigmented epithelium.</title>
        <authorList>
            <person name="Ying G."/>
            <person name="Boldt K."/>
            <person name="Ueffing M."/>
            <person name="Gerstner C.D."/>
            <person name="Frederick J.M."/>
            <person name="Baehr W."/>
        </authorList>
    </citation>
    <scope>INTERACTION WITH PDE6D AND KCNJ13</scope>
</reference>
<proteinExistence type="evidence at protein level"/>
<keyword id="KW-0007">Acetylation</keyword>
<keyword id="KW-1003">Cell membrane</keyword>
<keyword id="KW-0966">Cell projection</keyword>
<keyword id="KW-0963">Cytoplasm</keyword>
<keyword id="KW-0206">Cytoskeleton</keyword>
<keyword id="KW-0342">GTP-binding</keyword>
<keyword id="KW-0378">Hydrolase</keyword>
<keyword id="KW-0449">Lipoprotein</keyword>
<keyword id="KW-0460">Magnesium</keyword>
<keyword id="KW-0472">Membrane</keyword>
<keyword id="KW-0479">Metal-binding</keyword>
<keyword id="KW-0488">Methylation</keyword>
<keyword id="KW-0547">Nucleotide-binding</keyword>
<keyword id="KW-0539">Nucleus</keyword>
<keyword id="KW-0597">Phosphoprotein</keyword>
<keyword id="KW-0636">Prenylation</keyword>
<keyword id="KW-1185">Reference proteome</keyword>
<protein>
    <recommendedName>
        <fullName>Ras-related protein Rab-28</fullName>
        <ecNumber evidence="2">3.6.5.2</ecNumber>
    </recommendedName>
</protein>